<feature type="chain" id="PRO_1000099920" description="3-dehydroquinate dehydratase">
    <location>
        <begin position="1"/>
        <end position="225"/>
    </location>
</feature>
<feature type="active site" description="Proton donor/acceptor" evidence="1">
    <location>
        <position position="118"/>
    </location>
</feature>
<feature type="active site" description="Schiff-base intermediate with substrate" evidence="1">
    <location>
        <position position="143"/>
    </location>
</feature>
<feature type="binding site" evidence="1">
    <location>
        <position position="6"/>
    </location>
    <ligand>
        <name>3-dehydroquinate</name>
        <dbReference type="ChEBI" id="CHEBI:32364"/>
    </ligand>
</feature>
<feature type="binding site" evidence="1">
    <location>
        <begin position="30"/>
        <end position="32"/>
    </location>
    <ligand>
        <name>3-dehydroquinate</name>
        <dbReference type="ChEBI" id="CHEBI:32364"/>
    </ligand>
</feature>
<feature type="binding site" evidence="1">
    <location>
        <position position="62"/>
    </location>
    <ligand>
        <name>3-dehydroquinate</name>
        <dbReference type="ChEBI" id="CHEBI:32364"/>
    </ligand>
</feature>
<feature type="binding site" evidence="1">
    <location>
        <position position="186"/>
    </location>
    <ligand>
        <name>3-dehydroquinate</name>
        <dbReference type="ChEBI" id="CHEBI:32364"/>
    </ligand>
</feature>
<feature type="binding site" evidence="1">
    <location>
        <position position="205"/>
    </location>
    <ligand>
        <name>3-dehydroquinate</name>
        <dbReference type="ChEBI" id="CHEBI:32364"/>
    </ligand>
</feature>
<feature type="binding site" evidence="1">
    <location>
        <position position="209"/>
    </location>
    <ligand>
        <name>3-dehydroquinate</name>
        <dbReference type="ChEBI" id="CHEBI:32364"/>
    </ligand>
</feature>
<organism>
    <name type="scientific">Streptococcus pneumoniae serotype 19F (strain G54)</name>
    <dbReference type="NCBI Taxonomy" id="512566"/>
    <lineage>
        <taxon>Bacteria</taxon>
        <taxon>Bacillati</taxon>
        <taxon>Bacillota</taxon>
        <taxon>Bacilli</taxon>
        <taxon>Lactobacillales</taxon>
        <taxon>Streptococcaceae</taxon>
        <taxon>Streptococcus</taxon>
    </lineage>
</organism>
<name>AROD_STRP4</name>
<dbReference type="EC" id="4.2.1.10" evidence="1"/>
<dbReference type="EMBL" id="CP001015">
    <property type="protein sequence ID" value="ACF56079.1"/>
    <property type="molecule type" value="Genomic_DNA"/>
</dbReference>
<dbReference type="SMR" id="B5E5N5"/>
<dbReference type="KEGG" id="spx:SPG_1318"/>
<dbReference type="HOGENOM" id="CLU_064444_0_0_9"/>
<dbReference type="UniPathway" id="UPA00053">
    <property type="reaction ID" value="UER00086"/>
</dbReference>
<dbReference type="GO" id="GO:0003855">
    <property type="term" value="F:3-dehydroquinate dehydratase activity"/>
    <property type="evidence" value="ECO:0007669"/>
    <property type="project" value="UniProtKB-UniRule"/>
</dbReference>
<dbReference type="GO" id="GO:0046279">
    <property type="term" value="P:3,4-dihydroxybenzoate biosynthetic process"/>
    <property type="evidence" value="ECO:0007669"/>
    <property type="project" value="TreeGrafter"/>
</dbReference>
<dbReference type="GO" id="GO:0008652">
    <property type="term" value="P:amino acid biosynthetic process"/>
    <property type="evidence" value="ECO:0007669"/>
    <property type="project" value="UniProtKB-KW"/>
</dbReference>
<dbReference type="GO" id="GO:0009073">
    <property type="term" value="P:aromatic amino acid family biosynthetic process"/>
    <property type="evidence" value="ECO:0007669"/>
    <property type="project" value="UniProtKB-KW"/>
</dbReference>
<dbReference type="GO" id="GO:0009423">
    <property type="term" value="P:chorismate biosynthetic process"/>
    <property type="evidence" value="ECO:0007669"/>
    <property type="project" value="UniProtKB-UniRule"/>
</dbReference>
<dbReference type="CDD" id="cd00502">
    <property type="entry name" value="DHQase_I"/>
    <property type="match status" value="1"/>
</dbReference>
<dbReference type="FunFam" id="3.20.20.70:FF:000217">
    <property type="entry name" value="3-dehydroquinate dehydratase"/>
    <property type="match status" value="1"/>
</dbReference>
<dbReference type="Gene3D" id="3.20.20.70">
    <property type="entry name" value="Aldolase class I"/>
    <property type="match status" value="1"/>
</dbReference>
<dbReference type="HAMAP" id="MF_00214">
    <property type="entry name" value="AroD"/>
    <property type="match status" value="1"/>
</dbReference>
<dbReference type="InterPro" id="IPR013785">
    <property type="entry name" value="Aldolase_TIM"/>
</dbReference>
<dbReference type="InterPro" id="IPR001381">
    <property type="entry name" value="DHquinase_I"/>
</dbReference>
<dbReference type="InterPro" id="IPR050146">
    <property type="entry name" value="Type-I_3-dehydroquinase"/>
</dbReference>
<dbReference type="NCBIfam" id="TIGR01093">
    <property type="entry name" value="aroD"/>
    <property type="match status" value="1"/>
</dbReference>
<dbReference type="PANTHER" id="PTHR43699">
    <property type="entry name" value="3-DEHYDROQUINATE DEHYDRATASE"/>
    <property type="match status" value="1"/>
</dbReference>
<dbReference type="PANTHER" id="PTHR43699:SF1">
    <property type="entry name" value="3-DEHYDROQUINATE DEHYDRATASE"/>
    <property type="match status" value="1"/>
</dbReference>
<dbReference type="Pfam" id="PF01487">
    <property type="entry name" value="DHquinase_I"/>
    <property type="match status" value="1"/>
</dbReference>
<dbReference type="SUPFAM" id="SSF51569">
    <property type="entry name" value="Aldolase"/>
    <property type="match status" value="1"/>
</dbReference>
<sequence length="225" mass="25753">MKLIVSVMPRSLEEAQALDATRYLDADIIEWRADYLPKEAILQVAPAIFEKFAGRELVFTLRTRSEGGEIDLSPEEYIHLIKEVAQFYQPDYIDFEYYSYKDVFEEMLDFPNLVLSYHNFQETPENMMEILSELTILNPKLVKVAVMAHTEQDVLDLMNYTRGFKTLNPEQEYVTISMGKVGKVSRITADVTGSSWSFASLDEVSAPGQISLASMKKIREILDEA</sequence>
<gene>
    <name evidence="1" type="primary">aroD</name>
    <name type="ordered locus">SPG_1318</name>
</gene>
<protein>
    <recommendedName>
        <fullName evidence="1">3-dehydroquinate dehydratase</fullName>
        <shortName evidence="1">3-dehydroquinase</shortName>
        <ecNumber evidence="1">4.2.1.10</ecNumber>
    </recommendedName>
    <alternativeName>
        <fullName evidence="1">Type I DHQase</fullName>
    </alternativeName>
    <alternativeName>
        <fullName evidence="1">Type I dehydroquinase</fullName>
        <shortName evidence="1">DHQ1</shortName>
    </alternativeName>
</protein>
<reference key="1">
    <citation type="journal article" date="2001" name="Microb. Drug Resist.">
        <title>Annotated draft genomic sequence from a Streptococcus pneumoniae type 19F clinical isolate.</title>
        <authorList>
            <person name="Dopazo J."/>
            <person name="Mendoza A."/>
            <person name="Herrero J."/>
            <person name="Caldara F."/>
            <person name="Humbert Y."/>
            <person name="Friedli L."/>
            <person name="Guerrier M."/>
            <person name="Grand-Schenk E."/>
            <person name="Gandin C."/>
            <person name="de Francesco M."/>
            <person name="Polissi A."/>
            <person name="Buell G."/>
            <person name="Feger G."/>
            <person name="Garcia E."/>
            <person name="Peitsch M."/>
            <person name="Garcia-Bustos J.F."/>
        </authorList>
    </citation>
    <scope>NUCLEOTIDE SEQUENCE [LARGE SCALE GENOMIC DNA]</scope>
    <source>
        <strain>G54</strain>
    </source>
</reference>
<reference key="2">
    <citation type="submission" date="2008-03" db="EMBL/GenBank/DDBJ databases">
        <title>Pneumococcal beta glucoside metabolism investigated by whole genome comparison.</title>
        <authorList>
            <person name="Mulas L."/>
            <person name="Trappetti C."/>
            <person name="Hakenbeck R."/>
            <person name="Iannelli F."/>
            <person name="Pozzi G."/>
            <person name="Davidsen T.M."/>
            <person name="Tettelin H."/>
            <person name="Oggioni M."/>
        </authorList>
    </citation>
    <scope>NUCLEOTIDE SEQUENCE [LARGE SCALE GENOMIC DNA]</scope>
    <source>
        <strain>G54</strain>
    </source>
</reference>
<keyword id="KW-0028">Amino-acid biosynthesis</keyword>
<keyword id="KW-0057">Aromatic amino acid biosynthesis</keyword>
<keyword id="KW-0456">Lyase</keyword>
<keyword id="KW-0704">Schiff base</keyword>
<accession>B5E5N5</accession>
<proteinExistence type="inferred from homology"/>
<comment type="function">
    <text evidence="1">Involved in the third step of the chorismate pathway, which leads to the biosynthesis of aromatic amino acids. Catalyzes the cis-dehydration of 3-dehydroquinate (DHQ) and introduces the first double bond of the aromatic ring to yield 3-dehydroshikimate.</text>
</comment>
<comment type="catalytic activity">
    <reaction evidence="1">
        <text>3-dehydroquinate = 3-dehydroshikimate + H2O</text>
        <dbReference type="Rhea" id="RHEA:21096"/>
        <dbReference type="ChEBI" id="CHEBI:15377"/>
        <dbReference type="ChEBI" id="CHEBI:16630"/>
        <dbReference type="ChEBI" id="CHEBI:32364"/>
        <dbReference type="EC" id="4.2.1.10"/>
    </reaction>
</comment>
<comment type="pathway">
    <text evidence="1">Metabolic intermediate biosynthesis; chorismate biosynthesis; chorismate from D-erythrose 4-phosphate and phosphoenolpyruvate: step 3/7.</text>
</comment>
<comment type="subunit">
    <text evidence="1">Homodimer.</text>
</comment>
<comment type="similarity">
    <text evidence="1">Belongs to the type-I 3-dehydroquinase family.</text>
</comment>
<evidence type="ECO:0000255" key="1">
    <source>
        <dbReference type="HAMAP-Rule" id="MF_00214"/>
    </source>
</evidence>